<proteinExistence type="inferred from homology"/>
<accession>Q5H713</accession>
<feature type="chain" id="PRO_0000236163" description="DNA replication and repair protein RecF">
    <location>
        <begin position="1"/>
        <end position="368"/>
    </location>
</feature>
<feature type="binding site" evidence="1">
    <location>
        <begin position="30"/>
        <end position="37"/>
    </location>
    <ligand>
        <name>ATP</name>
        <dbReference type="ChEBI" id="CHEBI:30616"/>
    </ligand>
</feature>
<comment type="function">
    <text evidence="1">The RecF protein is involved in DNA metabolism; it is required for DNA replication and normal SOS inducibility. RecF binds preferentially to single-stranded, linear DNA. It also seems to bind ATP.</text>
</comment>
<comment type="subcellular location">
    <subcellularLocation>
        <location evidence="1">Cytoplasm</location>
    </subcellularLocation>
</comment>
<comment type="similarity">
    <text evidence="1">Belongs to the RecF family.</text>
</comment>
<protein>
    <recommendedName>
        <fullName evidence="1">DNA replication and repair protein RecF</fullName>
    </recommendedName>
</protein>
<reference key="1">
    <citation type="journal article" date="2005" name="Nucleic Acids Res.">
        <title>The genome sequence of Xanthomonas oryzae pathovar oryzae KACC10331, the bacterial blight pathogen of rice.</title>
        <authorList>
            <person name="Lee B.-M."/>
            <person name="Park Y.-J."/>
            <person name="Park D.-S."/>
            <person name="Kang H.-W."/>
            <person name="Kim J.-G."/>
            <person name="Song E.-S."/>
            <person name="Park I.-C."/>
            <person name="Yoon U.-H."/>
            <person name="Hahn J.-H."/>
            <person name="Koo B.-S."/>
            <person name="Lee G.-B."/>
            <person name="Kim H."/>
            <person name="Park H.-S."/>
            <person name="Yoon K.-O."/>
            <person name="Kim J.-H."/>
            <person name="Jung C.-H."/>
            <person name="Koh N.-H."/>
            <person name="Seo J.-S."/>
            <person name="Go S.-J."/>
        </authorList>
    </citation>
    <scope>NUCLEOTIDE SEQUENCE [LARGE SCALE GENOMIC DNA]</scope>
    <source>
        <strain>KACC10331 / KXO85</strain>
    </source>
</reference>
<dbReference type="EMBL" id="AE013598">
    <property type="protein sequence ID" value="AAW73257.1"/>
    <property type="molecule type" value="Genomic_DNA"/>
</dbReference>
<dbReference type="SMR" id="Q5H713"/>
<dbReference type="STRING" id="291331.XOO0003"/>
<dbReference type="KEGG" id="xoo:XOO0003"/>
<dbReference type="HOGENOM" id="CLU_040267_0_0_6"/>
<dbReference type="Proteomes" id="UP000006735">
    <property type="component" value="Chromosome"/>
</dbReference>
<dbReference type="GO" id="GO:0005737">
    <property type="term" value="C:cytoplasm"/>
    <property type="evidence" value="ECO:0007669"/>
    <property type="project" value="UniProtKB-SubCell"/>
</dbReference>
<dbReference type="GO" id="GO:0005524">
    <property type="term" value="F:ATP binding"/>
    <property type="evidence" value="ECO:0007669"/>
    <property type="project" value="UniProtKB-UniRule"/>
</dbReference>
<dbReference type="GO" id="GO:0003697">
    <property type="term" value="F:single-stranded DNA binding"/>
    <property type="evidence" value="ECO:0007669"/>
    <property type="project" value="UniProtKB-UniRule"/>
</dbReference>
<dbReference type="GO" id="GO:0006260">
    <property type="term" value="P:DNA replication"/>
    <property type="evidence" value="ECO:0007669"/>
    <property type="project" value="UniProtKB-UniRule"/>
</dbReference>
<dbReference type="GO" id="GO:0000731">
    <property type="term" value="P:DNA synthesis involved in DNA repair"/>
    <property type="evidence" value="ECO:0007669"/>
    <property type="project" value="TreeGrafter"/>
</dbReference>
<dbReference type="GO" id="GO:0006302">
    <property type="term" value="P:double-strand break repair"/>
    <property type="evidence" value="ECO:0007669"/>
    <property type="project" value="TreeGrafter"/>
</dbReference>
<dbReference type="GO" id="GO:0009432">
    <property type="term" value="P:SOS response"/>
    <property type="evidence" value="ECO:0007669"/>
    <property type="project" value="UniProtKB-UniRule"/>
</dbReference>
<dbReference type="FunFam" id="1.20.1050.90:FF:000006">
    <property type="entry name" value="DNA replication and repair protein RecF"/>
    <property type="match status" value="1"/>
</dbReference>
<dbReference type="Gene3D" id="3.40.50.300">
    <property type="entry name" value="P-loop containing nucleotide triphosphate hydrolases"/>
    <property type="match status" value="1"/>
</dbReference>
<dbReference type="Gene3D" id="1.20.1050.90">
    <property type="entry name" value="RecF/RecN/SMC, N-terminal domain"/>
    <property type="match status" value="1"/>
</dbReference>
<dbReference type="HAMAP" id="MF_00365">
    <property type="entry name" value="RecF"/>
    <property type="match status" value="1"/>
</dbReference>
<dbReference type="InterPro" id="IPR001238">
    <property type="entry name" value="DNA-binding_RecF"/>
</dbReference>
<dbReference type="InterPro" id="IPR018078">
    <property type="entry name" value="DNA-binding_RecF_CS"/>
</dbReference>
<dbReference type="InterPro" id="IPR027417">
    <property type="entry name" value="P-loop_NTPase"/>
</dbReference>
<dbReference type="InterPro" id="IPR003395">
    <property type="entry name" value="RecF/RecN/SMC_N"/>
</dbReference>
<dbReference type="InterPro" id="IPR042174">
    <property type="entry name" value="RecF_2"/>
</dbReference>
<dbReference type="NCBIfam" id="TIGR00611">
    <property type="entry name" value="recf"/>
    <property type="match status" value="1"/>
</dbReference>
<dbReference type="PANTHER" id="PTHR32182">
    <property type="entry name" value="DNA REPLICATION AND REPAIR PROTEIN RECF"/>
    <property type="match status" value="1"/>
</dbReference>
<dbReference type="PANTHER" id="PTHR32182:SF0">
    <property type="entry name" value="DNA REPLICATION AND REPAIR PROTEIN RECF"/>
    <property type="match status" value="1"/>
</dbReference>
<dbReference type="Pfam" id="PF02463">
    <property type="entry name" value="SMC_N"/>
    <property type="match status" value="1"/>
</dbReference>
<dbReference type="SUPFAM" id="SSF52540">
    <property type="entry name" value="P-loop containing nucleoside triphosphate hydrolases"/>
    <property type="match status" value="1"/>
</dbReference>
<dbReference type="PROSITE" id="PS00617">
    <property type="entry name" value="RECF_1"/>
    <property type="match status" value="1"/>
</dbReference>
<dbReference type="PROSITE" id="PS00618">
    <property type="entry name" value="RECF_2"/>
    <property type="match status" value="1"/>
</dbReference>
<name>RECF_XANOR</name>
<organism>
    <name type="scientific">Xanthomonas oryzae pv. oryzae (strain KACC10331 / KXO85)</name>
    <dbReference type="NCBI Taxonomy" id="291331"/>
    <lineage>
        <taxon>Bacteria</taxon>
        <taxon>Pseudomonadati</taxon>
        <taxon>Pseudomonadota</taxon>
        <taxon>Gammaproteobacteria</taxon>
        <taxon>Lysobacterales</taxon>
        <taxon>Lysobacteraceae</taxon>
        <taxon>Xanthomonas</taxon>
    </lineage>
</organism>
<keyword id="KW-0067">ATP-binding</keyword>
<keyword id="KW-0963">Cytoplasm</keyword>
<keyword id="KW-0227">DNA damage</keyword>
<keyword id="KW-0234">DNA repair</keyword>
<keyword id="KW-0235">DNA replication</keyword>
<keyword id="KW-0238">DNA-binding</keyword>
<keyword id="KW-0547">Nucleotide-binding</keyword>
<keyword id="KW-1185">Reference proteome</keyword>
<keyword id="KW-0742">SOS response</keyword>
<sequence length="368" mass="40842">MHVMRLSIHRLRRFQTVELHPASALNLLTGDNGAGKTSVLEALHLMAYGRSFRGRVRDGLIQQGANDLEVFVEWKEGGSAAGERTRRAGLRHSGQEWTGRLDGEDVAQLGSLCAALAVVTFEPGSHVLISGGGEPRRRFLDWGLFHVEPDFLALWRRYVRALKQRNALLKQGAQPRMLDAWDHELAESGETLTSRRMRYLERLQDRLIPVADVIAPSLGLSALTFAPGWKRHEVSLADALLLARDRDRQNGYTSQGPHRADWMPHFDVLPGKDALSRGQAKLTALACLLAQAEDFAFERSEWPVIALDDLGSELDRHHQARVLHRLVSAPAQMLITATEIPPGLADAGALLHRFHVEHGQVALQAPSD</sequence>
<gene>
    <name evidence="1" type="primary">recF</name>
    <name type="ordered locus">XOO0003</name>
</gene>
<evidence type="ECO:0000255" key="1">
    <source>
        <dbReference type="HAMAP-Rule" id="MF_00365"/>
    </source>
</evidence>